<reference key="1">
    <citation type="journal article" date="2006" name="Proc. Natl. Acad. Sci. U.S.A.">
        <title>Comparative genomics of the lactic acid bacteria.</title>
        <authorList>
            <person name="Makarova K.S."/>
            <person name="Slesarev A."/>
            <person name="Wolf Y.I."/>
            <person name="Sorokin A."/>
            <person name="Mirkin B."/>
            <person name="Koonin E.V."/>
            <person name="Pavlov A."/>
            <person name="Pavlova N."/>
            <person name="Karamychev V."/>
            <person name="Polouchine N."/>
            <person name="Shakhova V."/>
            <person name="Grigoriev I."/>
            <person name="Lou Y."/>
            <person name="Rohksar D."/>
            <person name="Lucas S."/>
            <person name="Huang K."/>
            <person name="Goodstein D.M."/>
            <person name="Hawkins T."/>
            <person name="Plengvidhya V."/>
            <person name="Welker D."/>
            <person name="Hughes J."/>
            <person name="Goh Y."/>
            <person name="Benson A."/>
            <person name="Baldwin K."/>
            <person name="Lee J.-H."/>
            <person name="Diaz-Muniz I."/>
            <person name="Dosti B."/>
            <person name="Smeianov V."/>
            <person name="Wechter W."/>
            <person name="Barabote R."/>
            <person name="Lorca G."/>
            <person name="Altermann E."/>
            <person name="Barrangou R."/>
            <person name="Ganesan B."/>
            <person name="Xie Y."/>
            <person name="Rawsthorne H."/>
            <person name="Tamir D."/>
            <person name="Parker C."/>
            <person name="Breidt F."/>
            <person name="Broadbent J.R."/>
            <person name="Hutkins R."/>
            <person name="O'Sullivan D."/>
            <person name="Steele J."/>
            <person name="Unlu G."/>
            <person name="Saier M.H. Jr."/>
            <person name="Klaenhammer T."/>
            <person name="Richardson P."/>
            <person name="Kozyavkin S."/>
            <person name="Weimer B.C."/>
            <person name="Mills D.A."/>
        </authorList>
    </citation>
    <scope>NUCLEOTIDE SEQUENCE [LARGE SCALE GENOMIC DNA]</scope>
    <source>
        <strain>ATCC BAA-331 / PSU-1</strain>
    </source>
</reference>
<gene>
    <name evidence="1" type="primary">ade1</name>
    <name type="ordered locus">OEOE_0158</name>
</gene>
<feature type="chain" id="PRO_0000292389" description="Adenine deaminase 1">
    <location>
        <begin position="1"/>
        <end position="553"/>
    </location>
</feature>
<proteinExistence type="inferred from homology"/>
<evidence type="ECO:0000255" key="1">
    <source>
        <dbReference type="HAMAP-Rule" id="MF_01518"/>
    </source>
</evidence>
<organism>
    <name type="scientific">Oenococcus oeni (strain ATCC BAA-331 / PSU-1)</name>
    <dbReference type="NCBI Taxonomy" id="203123"/>
    <lineage>
        <taxon>Bacteria</taxon>
        <taxon>Bacillati</taxon>
        <taxon>Bacillota</taxon>
        <taxon>Bacilli</taxon>
        <taxon>Lactobacillales</taxon>
        <taxon>Lactobacillaceae</taxon>
        <taxon>Oenococcus</taxon>
    </lineage>
</organism>
<protein>
    <recommendedName>
        <fullName evidence="1">Adenine deaminase 1</fullName>
        <shortName evidence="1">Adenase 1</shortName>
        <shortName evidence="1">Adenine aminase 1</shortName>
        <ecNumber evidence="1">3.5.4.2</ecNumber>
    </recommendedName>
</protein>
<sequence>MGKQVYLHIFNAKILDVFNQRFEDTELWIDNGSIYFRGKSKDLTAKNNFNAEGNYIVPGLIDAHLHIESSLLAPSELAKLELRHGVTSIFADPHEIGSVSGVSGLFYMIQEARNTPLHIHYMLPSSVPATNFEHAGAVLHADALKPFYGFPEINGLAEVMDFPAVANGDPDMLEKIRDAQAAGHHADGHGAGLTREQLAVYRAVGIDTDHESTSGKEALERIQAGMKVFIREGTVERDEKSILPVVRKNNQSYFSFCTDDKSAIDIQKEGSVDNNVRLAISKGIPAERAFTMASYNAAVAQHVKNVGALTDGFIADLVIISNLDNFVTEKVMTEGNWVDKLESKVTTFTSPAVNAELSLNDLKLPLKSDKAHVINIQPEHITTKHTIESVNRDQQGNFVADQDYAKIIVAERYHNLGHGLGIIHGFNMQEGAIGSTIAHDSHNMIIAGVDDKPMIIAYDRLKRMGGGMILVDKNGFTRELPLEIAGLMSDKPYQEVIAKQKSLKGAFAKISKGIDFDPFLTLSFMALPVIPSLKITDQGLFDFDQFKFIDINA</sequence>
<keyword id="KW-0378">Hydrolase</keyword>
<keyword id="KW-0464">Manganese</keyword>
<keyword id="KW-1185">Reference proteome</keyword>
<comment type="catalytic activity">
    <reaction evidence="1">
        <text>adenine + H2O + H(+) = hypoxanthine + NH4(+)</text>
        <dbReference type="Rhea" id="RHEA:23688"/>
        <dbReference type="ChEBI" id="CHEBI:15377"/>
        <dbReference type="ChEBI" id="CHEBI:15378"/>
        <dbReference type="ChEBI" id="CHEBI:16708"/>
        <dbReference type="ChEBI" id="CHEBI:17368"/>
        <dbReference type="ChEBI" id="CHEBI:28938"/>
        <dbReference type="EC" id="3.5.4.2"/>
    </reaction>
</comment>
<comment type="cofactor">
    <cofactor evidence="1">
        <name>Mn(2+)</name>
        <dbReference type="ChEBI" id="CHEBI:29035"/>
    </cofactor>
</comment>
<comment type="similarity">
    <text evidence="1">Belongs to the metallo-dependent hydrolases superfamily. Adenine deaminase family.</text>
</comment>
<dbReference type="EC" id="3.5.4.2" evidence="1"/>
<dbReference type="EMBL" id="CP000411">
    <property type="protein sequence ID" value="ABJ56151.1"/>
    <property type="molecule type" value="Genomic_DNA"/>
</dbReference>
<dbReference type="SMR" id="Q04HC1"/>
<dbReference type="STRING" id="203123.OEOE_0158"/>
<dbReference type="KEGG" id="ooe:OEOE_0158"/>
<dbReference type="eggNOG" id="COG1001">
    <property type="taxonomic scope" value="Bacteria"/>
</dbReference>
<dbReference type="HOGENOM" id="CLU_027935_0_0_9"/>
<dbReference type="Proteomes" id="UP000000774">
    <property type="component" value="Chromosome"/>
</dbReference>
<dbReference type="GO" id="GO:0000034">
    <property type="term" value="F:adenine deaminase activity"/>
    <property type="evidence" value="ECO:0007669"/>
    <property type="project" value="UniProtKB-UniRule"/>
</dbReference>
<dbReference type="GO" id="GO:0006146">
    <property type="term" value="P:adenine catabolic process"/>
    <property type="evidence" value="ECO:0007669"/>
    <property type="project" value="InterPro"/>
</dbReference>
<dbReference type="CDD" id="cd01295">
    <property type="entry name" value="AdeC"/>
    <property type="match status" value="1"/>
</dbReference>
<dbReference type="Gene3D" id="3.20.20.140">
    <property type="entry name" value="Metal-dependent hydrolases"/>
    <property type="match status" value="1"/>
</dbReference>
<dbReference type="Gene3D" id="2.30.40.10">
    <property type="entry name" value="Urease, subunit C, domain 1"/>
    <property type="match status" value="1"/>
</dbReference>
<dbReference type="HAMAP" id="MF_01518">
    <property type="entry name" value="Adenine_deamin"/>
    <property type="match status" value="1"/>
</dbReference>
<dbReference type="InterPro" id="IPR006679">
    <property type="entry name" value="Adenine_deam"/>
</dbReference>
<dbReference type="InterPro" id="IPR026912">
    <property type="entry name" value="Adenine_deam_C"/>
</dbReference>
<dbReference type="InterPro" id="IPR006680">
    <property type="entry name" value="Amidohydro-rel"/>
</dbReference>
<dbReference type="InterPro" id="IPR011059">
    <property type="entry name" value="Metal-dep_hydrolase_composite"/>
</dbReference>
<dbReference type="InterPro" id="IPR032466">
    <property type="entry name" value="Metal_Hydrolase"/>
</dbReference>
<dbReference type="NCBIfam" id="TIGR01178">
    <property type="entry name" value="ade"/>
    <property type="match status" value="1"/>
</dbReference>
<dbReference type="PANTHER" id="PTHR11113:SF2">
    <property type="entry name" value="ADENINE DEAMINASE"/>
    <property type="match status" value="1"/>
</dbReference>
<dbReference type="PANTHER" id="PTHR11113">
    <property type="entry name" value="N-ACETYLGLUCOSAMINE-6-PHOSPHATE DEACETYLASE"/>
    <property type="match status" value="1"/>
</dbReference>
<dbReference type="Pfam" id="PF13382">
    <property type="entry name" value="Adenine_deam_C"/>
    <property type="match status" value="1"/>
</dbReference>
<dbReference type="Pfam" id="PF01979">
    <property type="entry name" value="Amidohydro_1"/>
    <property type="match status" value="1"/>
</dbReference>
<dbReference type="SUPFAM" id="SSF51338">
    <property type="entry name" value="Composite domain of metallo-dependent hydrolases"/>
    <property type="match status" value="1"/>
</dbReference>
<dbReference type="SUPFAM" id="SSF51556">
    <property type="entry name" value="Metallo-dependent hydrolases"/>
    <property type="match status" value="1"/>
</dbReference>
<accession>Q04HC1</accession>
<name>ADEC1_OENOB</name>